<name>SPSA_MAIZE</name>
<protein>
    <recommendedName>
        <fullName evidence="4">Sucrose-phosphate synthase</fullName>
        <ecNumber evidence="3">2.4.1.14</ecNumber>
    </recommendedName>
    <alternativeName>
        <fullName evidence="4">UDP-glucose-fructose-phosphate glucosyltransferase</fullName>
    </alternativeName>
</protein>
<accession>P31927</accession>
<evidence type="ECO:0000250" key="1">
    <source>
        <dbReference type="UniProtKB" id="P31928"/>
    </source>
</evidence>
<evidence type="ECO:0000256" key="2">
    <source>
        <dbReference type="SAM" id="MobiDB-lite"/>
    </source>
</evidence>
<evidence type="ECO:0000269" key="3">
    <source>
    </source>
</evidence>
<evidence type="ECO:0000303" key="4">
    <source>
    </source>
</evidence>
<evidence type="ECO:0000305" key="5"/>
<comment type="function">
    <text evidence="3">Plays a role in photosynthetic sucrose synthesis by catalyzing the rate-limiting step of sucrose biosynthesis from UDP-glucose and fructose- 6-phosphate (PubMed:1840396). Involved in the regulation of carbon partitioning in the leaves of plants (PubMed:1840396). May regulate the synthesis of sucrose and therefore play a major role as a limiting factor in the export of photoassimilates out of the leaf (PubMed:1840396). Plays a role for sucrose availability that is essential for plant growth and fiber elongation (PubMed:1840396).</text>
</comment>
<comment type="catalytic activity">
    <reaction evidence="3">
        <text>beta-D-fructose 6-phosphate + UDP-alpha-D-glucose = sucrose 6(F)-phosphate + UDP + H(+)</text>
        <dbReference type="Rhea" id="RHEA:22172"/>
        <dbReference type="ChEBI" id="CHEBI:15378"/>
        <dbReference type="ChEBI" id="CHEBI:57634"/>
        <dbReference type="ChEBI" id="CHEBI:57723"/>
        <dbReference type="ChEBI" id="CHEBI:58223"/>
        <dbReference type="ChEBI" id="CHEBI:58885"/>
        <dbReference type="EC" id="2.4.1.14"/>
    </reaction>
</comment>
<comment type="activity regulation">
    <text evidence="1">Activity is regulated by phosphorylation and moderated by concentration of metabolites and light.</text>
</comment>
<comment type="pathway">
    <text evidence="3">Glycan biosynthesis; sucrose biosynthesis; sucrose from D-fructose 6-phosphate and UDP-alpha-D-glucose: step 1/2.</text>
</comment>
<comment type="subunit">
    <text evidence="3">Homodimer or homotetramer.</text>
</comment>
<comment type="developmental stage">
    <text evidence="3">Germinating seeds or mature leaves.</text>
</comment>
<comment type="similarity">
    <text evidence="5">Belongs to the glycosyltransferase 1 family.</text>
</comment>
<reference key="1">
    <citation type="journal article" date="1991" name="Plant Cell">
        <title>Expression of a maize sucrose phosphate synthase in tomato alters leaf carbohydrate partitioning.</title>
        <authorList>
            <person name="Worrell A.C."/>
            <person name="Bruneau J.-M."/>
            <person name="Summerfelt K."/>
            <person name="Boersig M."/>
            <person name="Voelker T.A."/>
        </authorList>
    </citation>
    <scope>NUCLEOTIDE SEQUENCE [MRNA]</scope>
    <scope>PROTEIN SEQUENCE OF 71-74; 206-212; 471-481 AND 872-892</scope>
    <scope>FUNCTION</scope>
    <scope>CATALYTIC ACTIVITY</scope>
    <scope>PATHWAY</scope>
    <scope>SUBUNIT</scope>
    <scope>DEVELOPMENTAL STAGE</scope>
    <source>
        <strain>cv. Pioneer 3184</strain>
        <tissue>Leaf</tissue>
    </source>
</reference>
<feature type="chain" id="PRO_0000204671" description="Sucrose-phosphate synthase">
    <location>
        <begin position="1"/>
        <end position="1068"/>
    </location>
</feature>
<feature type="region of interest" description="Disordered" evidence="2">
    <location>
        <begin position="18"/>
        <end position="47"/>
    </location>
</feature>
<feature type="region of interest" description="Disordered" evidence="2">
    <location>
        <begin position="118"/>
        <end position="139"/>
    </location>
</feature>
<feature type="compositionally biased region" description="Gly residues" evidence="2">
    <location>
        <begin position="23"/>
        <end position="32"/>
    </location>
</feature>
<feature type="compositionally biased region" description="Basic and acidic residues" evidence="2">
    <location>
        <begin position="118"/>
        <end position="128"/>
    </location>
</feature>
<keyword id="KW-0903">Direct protein sequencing</keyword>
<keyword id="KW-0328">Glycosyltransferase</keyword>
<keyword id="KW-1185">Reference proteome</keyword>
<keyword id="KW-0808">Transferase</keyword>
<proteinExistence type="evidence at protein level"/>
<sequence length="1068" mass="118575">MAGNEWINGYLEAILDSHTSSRGAGGGGGGGDPRSPTKAASPRGAHMNFNPSHYFVEEVVKGVDESDLHRTWIKVVATRNARERSTRLENMCWRIWHLARKKKQLELEGIQRISARRKEQEQVRREATEDLAEDLSEGEKGDTIGELAPVETTKKKFQRNFSDLTVWSDDNKEKKLYIVLISVHGLVRGENMELGRDSDTGGQVKYVVELARAMSMMPGVYRVDLFTRQVSSPDVDWSYGEPTEMLCAGSNDGEGMGESGGAYIVRIPCGPRDKYLKKEALWPYLQEFVDGALAHILNMSKALGEQVGNGRPVLPYVIHGHYADAGDVAALLSGALNVPMVLTGHSLGRNKLEQLLKQGRMSKEEIDSTYKIMRRIEGEELALDASELVITSTRQEIDEQWGLYDGFDVKLEKVLRARARRGVSCHGRYMPRMVVIPPGMDFSNVVVHEDIDGDGDVKDDIVGLEGASPKSMPPIWAEVMRFLTNPHKPMILALSRPDPKKNITTLVKAFGECRPLRELANLTLIMGNRDDIDDMSAGNASVLTTVLKLIDKYDLYGSVAFPKHHNQADVPEIYRLAAKMKGVFINPALVEPFGLTLIEAAAHGLPIVATKNGGPVDITNALNNGLLVDPHDQNAIADALLKLVADKNLWQECRRNGLRNIHLYSWPEHCRTYLTRVAGCRLRNPRWLKDTPADAGADEEEFLEDSMDAQDLSLRLSIDGEKSSLNTNDPLWFDPQDQVQKIMNNIKQSSALPPSMSSVAAEGTGSTMNKYPLLRRRRRLFVIAVDCYQDDGRASKKMLQVIQEVFRAVRSDSQMFKISGFTLSTAMPLSETLQLLQLGKIPATDFDALICGSGSEVYYPGTANCMDAEGKLRPDQDYLMHISHRWSHDGARQTIAKLMGAQDGSGDAVEQDVASSNAHCVAFLIKDPQKVKTVDEMRERLRMRGLRCHIMYCRNSTRLQVVPLLASRSQALRYLSVRWGVSVGNMYLITGEHGDTDLEEMLSGLHKTVIVRGVTEKGSEALVRSPGSYKRDDVVPSETPLAAYTTGELKADEIMRALKQVSKTSSGM</sequence>
<gene>
    <name evidence="4" type="primary">SPS</name>
</gene>
<organism>
    <name type="scientific">Zea mays</name>
    <name type="common">Maize</name>
    <dbReference type="NCBI Taxonomy" id="4577"/>
    <lineage>
        <taxon>Eukaryota</taxon>
        <taxon>Viridiplantae</taxon>
        <taxon>Streptophyta</taxon>
        <taxon>Embryophyta</taxon>
        <taxon>Tracheophyta</taxon>
        <taxon>Spermatophyta</taxon>
        <taxon>Magnoliopsida</taxon>
        <taxon>Liliopsida</taxon>
        <taxon>Poales</taxon>
        <taxon>Poaceae</taxon>
        <taxon>PACMAD clade</taxon>
        <taxon>Panicoideae</taxon>
        <taxon>Andropogonodae</taxon>
        <taxon>Andropogoneae</taxon>
        <taxon>Tripsacinae</taxon>
        <taxon>Zea</taxon>
    </lineage>
</organism>
<dbReference type="EC" id="2.4.1.14" evidence="3"/>
<dbReference type="EMBL" id="M97550">
    <property type="protein sequence ID" value="AAA33513.1"/>
    <property type="molecule type" value="mRNA"/>
</dbReference>
<dbReference type="PIR" id="JQ1329">
    <property type="entry name" value="JQ1329"/>
</dbReference>
<dbReference type="RefSeq" id="NP_001105694.1">
    <property type="nucleotide sequence ID" value="NM_001112224.1"/>
</dbReference>
<dbReference type="SMR" id="P31927"/>
<dbReference type="FunCoup" id="P31927">
    <property type="interactions" value="182"/>
</dbReference>
<dbReference type="STRING" id="4577.P31927"/>
<dbReference type="CAZy" id="GT4">
    <property type="family name" value="Glycosyltransferase Family 4"/>
</dbReference>
<dbReference type="PaxDb" id="4577-GRMZM5G875238_P01"/>
<dbReference type="EnsemblPlants" id="Zm00001eb364620_T001">
    <property type="protein sequence ID" value="Zm00001eb364620_P001"/>
    <property type="gene ID" value="Zm00001eb364620"/>
</dbReference>
<dbReference type="GeneID" id="542711"/>
<dbReference type="Gramene" id="Zm00001eb364620_T001">
    <property type="protein sequence ID" value="Zm00001eb364620_P001"/>
    <property type="gene ID" value="Zm00001eb364620"/>
</dbReference>
<dbReference type="KEGG" id="zma:542711"/>
<dbReference type="MaizeGDB" id="25294"/>
<dbReference type="eggNOG" id="KOG0853">
    <property type="taxonomic scope" value="Eukaryota"/>
</dbReference>
<dbReference type="HOGENOM" id="CLU_009583_24_0_1"/>
<dbReference type="InParanoid" id="P31927"/>
<dbReference type="OMA" id="PVGNMYI"/>
<dbReference type="OrthoDB" id="512920at2759"/>
<dbReference type="BRENDA" id="2.4.1.14">
    <property type="organism ID" value="6752"/>
</dbReference>
<dbReference type="UniPathway" id="UPA00371">
    <property type="reaction ID" value="UER00545"/>
</dbReference>
<dbReference type="Proteomes" id="UP000007305">
    <property type="component" value="Chromosome 8"/>
</dbReference>
<dbReference type="ExpressionAtlas" id="P31927">
    <property type="expression patterns" value="baseline and differential"/>
</dbReference>
<dbReference type="GO" id="GO:0046524">
    <property type="term" value="F:sucrose-phosphate synthase activity"/>
    <property type="evidence" value="ECO:0007669"/>
    <property type="project" value="UniProtKB-EC"/>
</dbReference>
<dbReference type="GO" id="GO:0005986">
    <property type="term" value="P:sucrose biosynthetic process"/>
    <property type="evidence" value="ECO:0007669"/>
    <property type="project" value="UniProtKB-UniPathway"/>
</dbReference>
<dbReference type="CDD" id="cd03800">
    <property type="entry name" value="GT4_sucrose_synthase"/>
    <property type="match status" value="1"/>
</dbReference>
<dbReference type="CDD" id="cd16419">
    <property type="entry name" value="HAD_SPS"/>
    <property type="match status" value="1"/>
</dbReference>
<dbReference type="Gene3D" id="3.90.1070.10">
    <property type="match status" value="1"/>
</dbReference>
<dbReference type="Gene3D" id="3.40.50.2000">
    <property type="entry name" value="Glycogen Phosphorylase B"/>
    <property type="match status" value="2"/>
</dbReference>
<dbReference type="Gene3D" id="3.40.50.1000">
    <property type="entry name" value="HAD superfamily/HAD-like"/>
    <property type="match status" value="1"/>
</dbReference>
<dbReference type="InterPro" id="IPR001296">
    <property type="entry name" value="Glyco_trans_1"/>
</dbReference>
<dbReference type="InterPro" id="IPR023214">
    <property type="entry name" value="HAD_sf"/>
</dbReference>
<dbReference type="InterPro" id="IPR006380">
    <property type="entry name" value="SPP-like_dom"/>
</dbReference>
<dbReference type="InterPro" id="IPR044161">
    <property type="entry name" value="SPS"/>
</dbReference>
<dbReference type="InterPro" id="IPR035659">
    <property type="entry name" value="SPS_C"/>
</dbReference>
<dbReference type="InterPro" id="IPR012819">
    <property type="entry name" value="SPS_pln"/>
</dbReference>
<dbReference type="InterPro" id="IPR000368">
    <property type="entry name" value="Sucrose_synth_GT-B1"/>
</dbReference>
<dbReference type="NCBIfam" id="TIGR02468">
    <property type="entry name" value="sucrsPsyn_pln"/>
    <property type="match status" value="1"/>
</dbReference>
<dbReference type="PANTHER" id="PTHR46039">
    <property type="entry name" value="SUCROSE-PHOSPHATE SYNTHASE 3-RELATED"/>
    <property type="match status" value="1"/>
</dbReference>
<dbReference type="PANTHER" id="PTHR46039:SF5">
    <property type="entry name" value="SUCROSE-PHOSPHATE SYNTHASE 3-RELATED"/>
    <property type="match status" value="1"/>
</dbReference>
<dbReference type="Pfam" id="PF00534">
    <property type="entry name" value="Glycos_transf_1"/>
    <property type="match status" value="1"/>
</dbReference>
<dbReference type="Pfam" id="PF00862">
    <property type="entry name" value="GT-B_Sucrose_synth"/>
    <property type="match status" value="1"/>
</dbReference>
<dbReference type="Pfam" id="PF05116">
    <property type="entry name" value="S6PP"/>
    <property type="match status" value="1"/>
</dbReference>
<dbReference type="SUPFAM" id="SSF53756">
    <property type="entry name" value="UDP-Glycosyltransferase/glycogen phosphorylase"/>
    <property type="match status" value="1"/>
</dbReference>